<feature type="chain" id="PRO_0000245198" description="FACT complex subunit SSRP1">
    <location>
        <begin position="1"/>
        <end position="642"/>
    </location>
</feature>
<feature type="DNA-binding region" description="HMG box" evidence="2">
    <location>
        <begin position="558"/>
        <end position="626"/>
    </location>
</feature>
<feature type="region of interest" description="Disordered" evidence="3">
    <location>
        <begin position="470"/>
        <end position="566"/>
    </location>
</feature>
<feature type="region of interest" description="Disordered" evidence="3">
    <location>
        <begin position="598"/>
        <end position="642"/>
    </location>
</feature>
<feature type="compositionally biased region" description="Acidic residues" evidence="3">
    <location>
        <begin position="475"/>
        <end position="486"/>
    </location>
</feature>
<feature type="compositionally biased region" description="Basic and acidic residues" evidence="3">
    <location>
        <begin position="513"/>
        <end position="527"/>
    </location>
</feature>
<feature type="compositionally biased region" description="Basic and acidic residues" evidence="3">
    <location>
        <begin position="598"/>
        <end position="623"/>
    </location>
</feature>
<feature type="compositionally biased region" description="Polar residues" evidence="3">
    <location>
        <begin position="629"/>
        <end position="642"/>
    </location>
</feature>
<comment type="function">
    <text evidence="1">Component of the FACT complex, a general chromatin factor that acts to reorganize nucleosomes. The FACT complex is involved in multiple processes that require DNA as a template such as mRNA elongation, DNA replication and DNA repair. During transcription elongation the FACT complex acts as a histone chaperone that both destabilizes and restores nucleosomal structure. It facilitates the passage of RNA polymerase II and transcription by promoting the dissociation of one histone H2A-H2B dimer from the nucleosome, then subsequently promotes the reestablishment of the nucleosome following the passage of RNA polymerase II. Binds specifically to double-stranded DNA (By similarity).</text>
</comment>
<comment type="subunit">
    <text evidence="1">Component of the FACT complex, a stable heterodimer of SPT16 and SSRP1.</text>
</comment>
<comment type="subcellular location">
    <subcellularLocation>
        <location evidence="2">Nucleus</location>
    </subcellularLocation>
    <subcellularLocation>
        <location evidence="1">Chromosome</location>
    </subcellularLocation>
</comment>
<comment type="similarity">
    <text evidence="4">Belongs to the SSRP1 family.</text>
</comment>
<keyword id="KW-0158">Chromosome</keyword>
<keyword id="KW-0227">DNA damage</keyword>
<keyword id="KW-0234">DNA repair</keyword>
<keyword id="KW-0235">DNA replication</keyword>
<keyword id="KW-0238">DNA-binding</keyword>
<keyword id="KW-0539">Nucleus</keyword>
<keyword id="KW-0804">Transcription</keyword>
<keyword id="KW-0805">Transcription regulation</keyword>
<organism>
    <name type="scientific">Vicia faba</name>
    <name type="common">Broad bean</name>
    <name type="synonym">Faba vulgaris</name>
    <dbReference type="NCBI Taxonomy" id="3906"/>
    <lineage>
        <taxon>Eukaryota</taxon>
        <taxon>Viridiplantae</taxon>
        <taxon>Streptophyta</taxon>
        <taxon>Embryophyta</taxon>
        <taxon>Tracheophyta</taxon>
        <taxon>Spermatophyta</taxon>
        <taxon>Magnoliopsida</taxon>
        <taxon>eudicotyledons</taxon>
        <taxon>Gunneridae</taxon>
        <taxon>Pentapetalae</taxon>
        <taxon>rosids</taxon>
        <taxon>fabids</taxon>
        <taxon>Fabales</taxon>
        <taxon>Fabaceae</taxon>
        <taxon>Papilionoideae</taxon>
        <taxon>50 kb inversion clade</taxon>
        <taxon>NPAAA clade</taxon>
        <taxon>Hologalegina</taxon>
        <taxon>IRL clade</taxon>
        <taxon>Fabeae</taxon>
        <taxon>Vicia</taxon>
    </lineage>
</organism>
<reference key="1">
    <citation type="submission" date="1996-05" db="EMBL/GenBank/DDBJ databases">
        <authorList>
            <person name="Wohlfarth T."/>
        </authorList>
    </citation>
    <scope>NUCLEOTIDE SEQUENCE [MRNA]</scope>
    <source>
        <strain>cv. Minor</strain>
        <tissue>Cotyledon</tissue>
    </source>
</reference>
<dbReference type="EMBL" id="X97906">
    <property type="protein sequence ID" value="CAA66480.1"/>
    <property type="molecule type" value="mRNA"/>
</dbReference>
<dbReference type="PIR" id="T12113">
    <property type="entry name" value="T12113"/>
</dbReference>
<dbReference type="GO" id="GO:0035101">
    <property type="term" value="C:FACT complex"/>
    <property type="evidence" value="ECO:0007669"/>
    <property type="project" value="TreeGrafter"/>
</dbReference>
<dbReference type="GO" id="GO:0003677">
    <property type="term" value="F:DNA binding"/>
    <property type="evidence" value="ECO:0007669"/>
    <property type="project" value="UniProtKB-KW"/>
</dbReference>
<dbReference type="GO" id="GO:0042393">
    <property type="term" value="F:histone binding"/>
    <property type="evidence" value="ECO:0007669"/>
    <property type="project" value="TreeGrafter"/>
</dbReference>
<dbReference type="GO" id="GO:0031491">
    <property type="term" value="F:nucleosome binding"/>
    <property type="evidence" value="ECO:0007669"/>
    <property type="project" value="TreeGrafter"/>
</dbReference>
<dbReference type="GO" id="GO:0006281">
    <property type="term" value="P:DNA repair"/>
    <property type="evidence" value="ECO:0007669"/>
    <property type="project" value="UniProtKB-KW"/>
</dbReference>
<dbReference type="GO" id="GO:0006260">
    <property type="term" value="P:DNA replication"/>
    <property type="evidence" value="ECO:0007669"/>
    <property type="project" value="UniProtKB-KW"/>
</dbReference>
<dbReference type="CDD" id="cd22013">
    <property type="entry name" value="HMG-box_AtSSRP1"/>
    <property type="match status" value="1"/>
</dbReference>
<dbReference type="CDD" id="cd13230">
    <property type="entry name" value="PH1_SSRP1-like"/>
    <property type="match status" value="1"/>
</dbReference>
<dbReference type="CDD" id="cd13231">
    <property type="entry name" value="PH2_SSRP1-like"/>
    <property type="match status" value="1"/>
</dbReference>
<dbReference type="FunFam" id="1.10.30.10:FF:000016">
    <property type="entry name" value="FACT complex subunit SSRP1"/>
    <property type="match status" value="1"/>
</dbReference>
<dbReference type="FunFam" id="2.30.29.220:FF:000002">
    <property type="entry name" value="FACT complex subunit SSRP1"/>
    <property type="match status" value="1"/>
</dbReference>
<dbReference type="FunFam" id="2.30.29.30:FF:000214">
    <property type="entry name" value="FACT complex subunit SSRP1"/>
    <property type="match status" value="1"/>
</dbReference>
<dbReference type="FunFam" id="2.30.29.30:FF:000298">
    <property type="entry name" value="FACT complex subunit SSRP1"/>
    <property type="match status" value="1"/>
</dbReference>
<dbReference type="FunFam" id="2.30.29.150:FF:000001">
    <property type="entry name" value="Fact complex subunit ssrp1"/>
    <property type="match status" value="1"/>
</dbReference>
<dbReference type="Gene3D" id="2.30.29.150">
    <property type="match status" value="1"/>
</dbReference>
<dbReference type="Gene3D" id="1.10.30.10">
    <property type="entry name" value="High mobility group box domain"/>
    <property type="match status" value="1"/>
</dbReference>
<dbReference type="Gene3D" id="2.30.29.30">
    <property type="entry name" value="Pleckstrin-homology domain (PH domain)/Phosphotyrosine-binding domain (PTB)"/>
    <property type="match status" value="2"/>
</dbReference>
<dbReference type="Gene3D" id="2.30.29.220">
    <property type="entry name" value="Structure-specific recognition protein (SSRP1)"/>
    <property type="match status" value="1"/>
</dbReference>
<dbReference type="InterPro" id="IPR009071">
    <property type="entry name" value="HMG_box_dom"/>
</dbReference>
<dbReference type="InterPro" id="IPR036910">
    <property type="entry name" value="HMG_box_dom_sf"/>
</dbReference>
<dbReference type="InterPro" id="IPR011993">
    <property type="entry name" value="PH-like_dom_sf"/>
</dbReference>
<dbReference type="InterPro" id="IPR013719">
    <property type="entry name" value="RTT106/SPT16-like_middle_dom"/>
</dbReference>
<dbReference type="InterPro" id="IPR050454">
    <property type="entry name" value="RTT106/SSRP1_HistChap/FACT"/>
</dbReference>
<dbReference type="InterPro" id="IPR048993">
    <property type="entry name" value="SSRP1-like_PH1"/>
</dbReference>
<dbReference type="InterPro" id="IPR000969">
    <property type="entry name" value="SSRP1/POB3"/>
</dbReference>
<dbReference type="InterPro" id="IPR035417">
    <property type="entry name" value="SSRP1/POB3_N"/>
</dbReference>
<dbReference type="InterPro" id="IPR024954">
    <property type="entry name" value="SSRP1_DD"/>
</dbReference>
<dbReference type="InterPro" id="IPR038167">
    <property type="entry name" value="SSRP1_sf"/>
</dbReference>
<dbReference type="PANTHER" id="PTHR45849">
    <property type="entry name" value="FACT COMPLEX SUBUNIT SSRP1"/>
    <property type="match status" value="1"/>
</dbReference>
<dbReference type="PANTHER" id="PTHR45849:SF1">
    <property type="entry name" value="FACT COMPLEX SUBUNIT SSRP1"/>
    <property type="match status" value="1"/>
</dbReference>
<dbReference type="Pfam" id="PF00505">
    <property type="entry name" value="HMG_box"/>
    <property type="match status" value="1"/>
</dbReference>
<dbReference type="Pfam" id="PF21103">
    <property type="entry name" value="PH1_SSRP1-like"/>
    <property type="match status" value="1"/>
</dbReference>
<dbReference type="Pfam" id="PF17292">
    <property type="entry name" value="POB3_N"/>
    <property type="match status" value="1"/>
</dbReference>
<dbReference type="Pfam" id="PF08512">
    <property type="entry name" value="Rttp106-like_middle"/>
    <property type="match status" value="1"/>
</dbReference>
<dbReference type="Pfam" id="PF03531">
    <property type="entry name" value="SSrecog"/>
    <property type="match status" value="1"/>
</dbReference>
<dbReference type="PRINTS" id="PR00887">
    <property type="entry name" value="SSRCOGNITION"/>
</dbReference>
<dbReference type="SMART" id="SM00398">
    <property type="entry name" value="HMG"/>
    <property type="match status" value="1"/>
</dbReference>
<dbReference type="SMART" id="SM01287">
    <property type="entry name" value="Rtt106"/>
    <property type="match status" value="1"/>
</dbReference>
<dbReference type="SUPFAM" id="SSF47095">
    <property type="entry name" value="HMG-box"/>
    <property type="match status" value="1"/>
</dbReference>
<dbReference type="SUPFAM" id="SSF50729">
    <property type="entry name" value="PH domain-like"/>
    <property type="match status" value="1"/>
</dbReference>
<dbReference type="PROSITE" id="PS50118">
    <property type="entry name" value="HMG_BOX_2"/>
    <property type="match status" value="1"/>
</dbReference>
<name>SSRP1_VICFA</name>
<proteinExistence type="evidence at transcript level"/>
<evidence type="ECO:0000250" key="1"/>
<evidence type="ECO:0000255" key="2">
    <source>
        <dbReference type="PROSITE-ProRule" id="PRU00267"/>
    </source>
</evidence>
<evidence type="ECO:0000256" key="3">
    <source>
        <dbReference type="SAM" id="MobiDB-lite"/>
    </source>
</evidence>
<evidence type="ECO:0000305" key="4"/>
<gene>
    <name type="primary">SSRP1</name>
</gene>
<protein>
    <recommendedName>
        <fullName>FACT complex subunit SSRP1</fullName>
    </recommendedName>
    <alternativeName>
        <fullName>Facilitates chromatin transcription complex subunit SSRP1</fullName>
    </alternativeName>
    <alternativeName>
        <fullName>Recombination signal sequence recognition protein 1</fullName>
    </alternativeName>
</protein>
<sequence length="642" mass="71358">MTDGHLFNNITLGXRGGTNPGQIKIYSGGILWKRQGGGKTIDVDKTDIMGVTWMKVPKTNQLGVQIKDGLLYKFTGFRDQDVVSLTNFFQNTFGITVEEKQLSVTGRNWGEVDLNGNMLAFMVGSKQAFEVSLADVSQTNLQGKNDVILEFHVDDTTGANEKDSLMEMSFHIPSSNTQFVGDENRPSAQVFRDKIMSMADVGVGGEDAVVTFDGIAILTPRGRYSVELHLSFLRLQGQANDFKIQYSSVVRLFLLPKSNQPHTFVIISLDPPIRKGQTLYPHIVMQFETDTVVDSELAISEDLYNSKYKDKLELSYKGLIHEVFTTVLRGLSGGKVTKPGNFRSCQDGYAVKSSLKAEDGILYPLEKSFFFLPKPPTLILHEEIDYVEFERHAAGGSNMHYFDLLIRLKSEQEHLFRNIQRNEYHNLYGFISSKGLKIMNIADAQQAVGGVAKVLENDDDDAVDPHLERIRNEAGGDESDEEDSDFVIDKDDGGSPTDDSGADVSDASQSGGETEKPAKKEPKKDLSSKASSSKKKSKDADVDGVKKKQKKKKDPNAPKRALSGFMFFSQMERENLKKTNPGISFTDVGRVLGEKWKNLSAEEKEPYEAKAQADKKRYKDEISGYKNPQPMNVDSGNESDSA</sequence>
<accession>O04235</accession>